<accession>B4EA68</accession>
<gene>
    <name evidence="1" type="primary">gpsA</name>
    <name type="ordered locus">BceJ2315_07360</name>
    <name type="ORF">BCAL0743</name>
</gene>
<feature type="chain" id="PRO_1000123126" description="Glycerol-3-phosphate dehydrogenase [NAD(P)+]">
    <location>
        <begin position="1"/>
        <end position="332"/>
    </location>
</feature>
<feature type="active site" description="Proton acceptor" evidence="1">
    <location>
        <position position="192"/>
    </location>
</feature>
<feature type="binding site" evidence="1">
    <location>
        <position position="11"/>
    </location>
    <ligand>
        <name>NADPH</name>
        <dbReference type="ChEBI" id="CHEBI:57783"/>
    </ligand>
</feature>
<feature type="binding site" evidence="1">
    <location>
        <position position="30"/>
    </location>
    <ligand>
        <name>NADPH</name>
        <dbReference type="ChEBI" id="CHEBI:57783"/>
    </ligand>
</feature>
<feature type="binding site" evidence="1">
    <location>
        <position position="108"/>
    </location>
    <ligand>
        <name>NADPH</name>
        <dbReference type="ChEBI" id="CHEBI:57783"/>
    </ligand>
</feature>
<feature type="binding site" evidence="1">
    <location>
        <position position="108"/>
    </location>
    <ligand>
        <name>sn-glycerol 3-phosphate</name>
        <dbReference type="ChEBI" id="CHEBI:57597"/>
    </ligand>
</feature>
<feature type="binding site" evidence="1">
    <location>
        <position position="137"/>
    </location>
    <ligand>
        <name>sn-glycerol 3-phosphate</name>
        <dbReference type="ChEBI" id="CHEBI:57597"/>
    </ligand>
</feature>
<feature type="binding site" evidence="1">
    <location>
        <position position="139"/>
    </location>
    <ligand>
        <name>sn-glycerol 3-phosphate</name>
        <dbReference type="ChEBI" id="CHEBI:57597"/>
    </ligand>
</feature>
<feature type="binding site" evidence="1">
    <location>
        <position position="141"/>
    </location>
    <ligand>
        <name>NADPH</name>
        <dbReference type="ChEBI" id="CHEBI:57783"/>
    </ligand>
</feature>
<feature type="binding site" evidence="1">
    <location>
        <position position="192"/>
    </location>
    <ligand>
        <name>sn-glycerol 3-phosphate</name>
        <dbReference type="ChEBI" id="CHEBI:57597"/>
    </ligand>
</feature>
<feature type="binding site" evidence="1">
    <location>
        <position position="245"/>
    </location>
    <ligand>
        <name>sn-glycerol 3-phosphate</name>
        <dbReference type="ChEBI" id="CHEBI:57597"/>
    </ligand>
</feature>
<feature type="binding site" evidence="1">
    <location>
        <position position="255"/>
    </location>
    <ligand>
        <name>sn-glycerol 3-phosphate</name>
        <dbReference type="ChEBI" id="CHEBI:57597"/>
    </ligand>
</feature>
<feature type="binding site" evidence="1">
    <location>
        <position position="256"/>
    </location>
    <ligand>
        <name>NADPH</name>
        <dbReference type="ChEBI" id="CHEBI:57783"/>
    </ligand>
</feature>
<feature type="binding site" evidence="1">
    <location>
        <position position="256"/>
    </location>
    <ligand>
        <name>sn-glycerol 3-phosphate</name>
        <dbReference type="ChEBI" id="CHEBI:57597"/>
    </ligand>
</feature>
<feature type="binding site" evidence="1">
    <location>
        <position position="257"/>
    </location>
    <ligand>
        <name>sn-glycerol 3-phosphate</name>
        <dbReference type="ChEBI" id="CHEBI:57597"/>
    </ligand>
</feature>
<feature type="binding site" evidence="1">
    <location>
        <position position="280"/>
    </location>
    <ligand>
        <name>NADPH</name>
        <dbReference type="ChEBI" id="CHEBI:57783"/>
    </ligand>
</feature>
<feature type="binding site" evidence="1">
    <location>
        <position position="282"/>
    </location>
    <ligand>
        <name>NADPH</name>
        <dbReference type="ChEBI" id="CHEBI:57783"/>
    </ligand>
</feature>
<reference key="1">
    <citation type="journal article" date="2009" name="J. Bacteriol.">
        <title>The genome of Burkholderia cenocepacia J2315, an epidemic pathogen of cystic fibrosis patients.</title>
        <authorList>
            <person name="Holden M.T."/>
            <person name="Seth-Smith H.M."/>
            <person name="Crossman L.C."/>
            <person name="Sebaihia M."/>
            <person name="Bentley S.D."/>
            <person name="Cerdeno-Tarraga A.M."/>
            <person name="Thomson N.R."/>
            <person name="Bason N."/>
            <person name="Quail M.A."/>
            <person name="Sharp S."/>
            <person name="Cherevach I."/>
            <person name="Churcher C."/>
            <person name="Goodhead I."/>
            <person name="Hauser H."/>
            <person name="Holroyd N."/>
            <person name="Mungall K."/>
            <person name="Scott P."/>
            <person name="Walker D."/>
            <person name="White B."/>
            <person name="Rose H."/>
            <person name="Iversen P."/>
            <person name="Mil-Homens D."/>
            <person name="Rocha E.P."/>
            <person name="Fialho A.M."/>
            <person name="Baldwin A."/>
            <person name="Dowson C."/>
            <person name="Barrell B.G."/>
            <person name="Govan J.R."/>
            <person name="Vandamme P."/>
            <person name="Hart C.A."/>
            <person name="Mahenthiralingam E."/>
            <person name="Parkhill J."/>
        </authorList>
    </citation>
    <scope>NUCLEOTIDE SEQUENCE [LARGE SCALE GENOMIC DNA]</scope>
    <source>
        <strain>ATCC BAA-245 / DSM 16553 / LMG 16656 / NCTC 13227 / J2315 / CF5610</strain>
    </source>
</reference>
<comment type="function">
    <text evidence="1">Catalyzes the reduction of the glycolytic intermediate dihydroxyacetone phosphate (DHAP) to sn-glycerol 3-phosphate (G3P), the key precursor for phospholipid synthesis.</text>
</comment>
<comment type="catalytic activity">
    <reaction evidence="1">
        <text>sn-glycerol 3-phosphate + NAD(+) = dihydroxyacetone phosphate + NADH + H(+)</text>
        <dbReference type="Rhea" id="RHEA:11092"/>
        <dbReference type="ChEBI" id="CHEBI:15378"/>
        <dbReference type="ChEBI" id="CHEBI:57540"/>
        <dbReference type="ChEBI" id="CHEBI:57597"/>
        <dbReference type="ChEBI" id="CHEBI:57642"/>
        <dbReference type="ChEBI" id="CHEBI:57945"/>
        <dbReference type="EC" id="1.1.1.94"/>
    </reaction>
    <physiologicalReaction direction="right-to-left" evidence="1">
        <dbReference type="Rhea" id="RHEA:11094"/>
    </physiologicalReaction>
</comment>
<comment type="catalytic activity">
    <reaction evidence="1">
        <text>sn-glycerol 3-phosphate + NADP(+) = dihydroxyacetone phosphate + NADPH + H(+)</text>
        <dbReference type="Rhea" id="RHEA:11096"/>
        <dbReference type="ChEBI" id="CHEBI:15378"/>
        <dbReference type="ChEBI" id="CHEBI:57597"/>
        <dbReference type="ChEBI" id="CHEBI:57642"/>
        <dbReference type="ChEBI" id="CHEBI:57783"/>
        <dbReference type="ChEBI" id="CHEBI:58349"/>
        <dbReference type="EC" id="1.1.1.94"/>
    </reaction>
    <physiologicalReaction direction="right-to-left" evidence="1">
        <dbReference type="Rhea" id="RHEA:11098"/>
    </physiologicalReaction>
</comment>
<comment type="pathway">
    <text evidence="1">Membrane lipid metabolism; glycerophospholipid metabolism.</text>
</comment>
<comment type="subcellular location">
    <subcellularLocation>
        <location evidence="1">Cytoplasm</location>
    </subcellularLocation>
</comment>
<comment type="similarity">
    <text evidence="1">Belongs to the NAD-dependent glycerol-3-phosphate dehydrogenase family.</text>
</comment>
<evidence type="ECO:0000255" key="1">
    <source>
        <dbReference type="HAMAP-Rule" id="MF_00394"/>
    </source>
</evidence>
<sequence>MKVAVLGAGAWGTALAGHLAARHDTLLWARDAALIAGLQARHENSRYLDGIALPDALRYDADLGVALAHGAADDALCVIAAPVAGLRTLCHAMRDAGCVPAHIVWVCKGFEADTHLLPHQVIAAELPGQQSNGVLSGPSFAREVGQSLPVALTVASTSAGCRERTLAAFHHGAMRIYTGDDVVGVEVGGAVKNVLAIATGISDGLGLGLNARAALITRGLAEMSRLGVALGGRAETFTGLTGLGDLILTATGDLSRNRTVGLQLAAGRTLNDILGALGHVAEGVRCAQAVLALARAQSIEMPIAEAVCGVLFDGIAPRDAVSGLLRRDARAE</sequence>
<name>GPDA_BURCJ</name>
<keyword id="KW-0963">Cytoplasm</keyword>
<keyword id="KW-0444">Lipid biosynthesis</keyword>
<keyword id="KW-0443">Lipid metabolism</keyword>
<keyword id="KW-0520">NAD</keyword>
<keyword id="KW-0521">NADP</keyword>
<keyword id="KW-0547">Nucleotide-binding</keyword>
<keyword id="KW-0560">Oxidoreductase</keyword>
<keyword id="KW-0594">Phospholipid biosynthesis</keyword>
<keyword id="KW-1208">Phospholipid metabolism</keyword>
<proteinExistence type="inferred from homology"/>
<protein>
    <recommendedName>
        <fullName evidence="1">Glycerol-3-phosphate dehydrogenase [NAD(P)+]</fullName>
        <ecNumber evidence="1">1.1.1.94</ecNumber>
    </recommendedName>
    <alternativeName>
        <fullName evidence="1">NAD(P)(+)-dependent glycerol-3-phosphate dehydrogenase</fullName>
    </alternativeName>
    <alternativeName>
        <fullName evidence="1">NAD(P)H-dependent dihydroxyacetone-phosphate reductase</fullName>
    </alternativeName>
</protein>
<dbReference type="EC" id="1.1.1.94" evidence="1"/>
<dbReference type="EMBL" id="AM747720">
    <property type="protein sequence ID" value="CAR51051.1"/>
    <property type="molecule type" value="Genomic_DNA"/>
</dbReference>
<dbReference type="RefSeq" id="WP_006481559.1">
    <property type="nucleotide sequence ID" value="NC_011000.1"/>
</dbReference>
<dbReference type="SMR" id="B4EA68"/>
<dbReference type="KEGG" id="bcj:BCAL0743"/>
<dbReference type="eggNOG" id="COG0240">
    <property type="taxonomic scope" value="Bacteria"/>
</dbReference>
<dbReference type="HOGENOM" id="CLU_033449_0_2_4"/>
<dbReference type="BioCyc" id="BCEN216591:G1G1V-834-MONOMER"/>
<dbReference type="UniPathway" id="UPA00940"/>
<dbReference type="Proteomes" id="UP000001035">
    <property type="component" value="Chromosome 1"/>
</dbReference>
<dbReference type="GO" id="GO:0005829">
    <property type="term" value="C:cytosol"/>
    <property type="evidence" value="ECO:0007669"/>
    <property type="project" value="TreeGrafter"/>
</dbReference>
<dbReference type="GO" id="GO:0047952">
    <property type="term" value="F:glycerol-3-phosphate dehydrogenase [NAD(P)+] activity"/>
    <property type="evidence" value="ECO:0007669"/>
    <property type="project" value="UniProtKB-UniRule"/>
</dbReference>
<dbReference type="GO" id="GO:0051287">
    <property type="term" value="F:NAD binding"/>
    <property type="evidence" value="ECO:0007669"/>
    <property type="project" value="InterPro"/>
</dbReference>
<dbReference type="GO" id="GO:0005975">
    <property type="term" value="P:carbohydrate metabolic process"/>
    <property type="evidence" value="ECO:0007669"/>
    <property type="project" value="InterPro"/>
</dbReference>
<dbReference type="GO" id="GO:0046167">
    <property type="term" value="P:glycerol-3-phosphate biosynthetic process"/>
    <property type="evidence" value="ECO:0007669"/>
    <property type="project" value="UniProtKB-UniRule"/>
</dbReference>
<dbReference type="GO" id="GO:0046168">
    <property type="term" value="P:glycerol-3-phosphate catabolic process"/>
    <property type="evidence" value="ECO:0007669"/>
    <property type="project" value="InterPro"/>
</dbReference>
<dbReference type="GO" id="GO:0006650">
    <property type="term" value="P:glycerophospholipid metabolic process"/>
    <property type="evidence" value="ECO:0007669"/>
    <property type="project" value="UniProtKB-UniRule"/>
</dbReference>
<dbReference type="GO" id="GO:0008654">
    <property type="term" value="P:phospholipid biosynthetic process"/>
    <property type="evidence" value="ECO:0007669"/>
    <property type="project" value="UniProtKB-KW"/>
</dbReference>
<dbReference type="FunFam" id="1.10.1040.10:FF:000001">
    <property type="entry name" value="Glycerol-3-phosphate dehydrogenase [NAD(P)+]"/>
    <property type="match status" value="1"/>
</dbReference>
<dbReference type="FunFam" id="3.40.50.720:FF:000019">
    <property type="entry name" value="Glycerol-3-phosphate dehydrogenase [NAD(P)+]"/>
    <property type="match status" value="1"/>
</dbReference>
<dbReference type="Gene3D" id="1.10.1040.10">
    <property type="entry name" value="N-(1-d-carboxylethyl)-l-norvaline Dehydrogenase, domain 2"/>
    <property type="match status" value="1"/>
</dbReference>
<dbReference type="Gene3D" id="3.40.50.720">
    <property type="entry name" value="NAD(P)-binding Rossmann-like Domain"/>
    <property type="match status" value="1"/>
</dbReference>
<dbReference type="HAMAP" id="MF_00394">
    <property type="entry name" value="NAD_Glyc3P_dehydrog"/>
    <property type="match status" value="1"/>
</dbReference>
<dbReference type="InterPro" id="IPR008927">
    <property type="entry name" value="6-PGluconate_DH-like_C_sf"/>
</dbReference>
<dbReference type="InterPro" id="IPR013328">
    <property type="entry name" value="6PGD_dom2"/>
</dbReference>
<dbReference type="InterPro" id="IPR006168">
    <property type="entry name" value="G3P_DH_NAD-dep"/>
</dbReference>
<dbReference type="InterPro" id="IPR006109">
    <property type="entry name" value="G3P_DH_NAD-dep_C"/>
</dbReference>
<dbReference type="InterPro" id="IPR011128">
    <property type="entry name" value="G3P_DH_NAD-dep_N"/>
</dbReference>
<dbReference type="InterPro" id="IPR036291">
    <property type="entry name" value="NAD(P)-bd_dom_sf"/>
</dbReference>
<dbReference type="NCBIfam" id="NF000940">
    <property type="entry name" value="PRK00094.1-2"/>
    <property type="match status" value="1"/>
</dbReference>
<dbReference type="NCBIfam" id="NF000942">
    <property type="entry name" value="PRK00094.1-4"/>
    <property type="match status" value="1"/>
</dbReference>
<dbReference type="PANTHER" id="PTHR11728">
    <property type="entry name" value="GLYCEROL-3-PHOSPHATE DEHYDROGENASE"/>
    <property type="match status" value="1"/>
</dbReference>
<dbReference type="PANTHER" id="PTHR11728:SF1">
    <property type="entry name" value="GLYCEROL-3-PHOSPHATE DEHYDROGENASE [NAD(+)] 2, CHLOROPLASTIC"/>
    <property type="match status" value="1"/>
</dbReference>
<dbReference type="Pfam" id="PF07479">
    <property type="entry name" value="NAD_Gly3P_dh_C"/>
    <property type="match status" value="1"/>
</dbReference>
<dbReference type="Pfam" id="PF01210">
    <property type="entry name" value="NAD_Gly3P_dh_N"/>
    <property type="match status" value="1"/>
</dbReference>
<dbReference type="PIRSF" id="PIRSF000114">
    <property type="entry name" value="Glycerol-3-P_dh"/>
    <property type="match status" value="1"/>
</dbReference>
<dbReference type="PRINTS" id="PR00077">
    <property type="entry name" value="GPDHDRGNASE"/>
</dbReference>
<dbReference type="SUPFAM" id="SSF48179">
    <property type="entry name" value="6-phosphogluconate dehydrogenase C-terminal domain-like"/>
    <property type="match status" value="1"/>
</dbReference>
<dbReference type="SUPFAM" id="SSF51735">
    <property type="entry name" value="NAD(P)-binding Rossmann-fold domains"/>
    <property type="match status" value="1"/>
</dbReference>
<dbReference type="PROSITE" id="PS00957">
    <property type="entry name" value="NAD_G3PDH"/>
    <property type="match status" value="1"/>
</dbReference>
<organism>
    <name type="scientific">Burkholderia cenocepacia (strain ATCC BAA-245 / DSM 16553 / LMG 16656 / NCTC 13227 / J2315 / CF5610)</name>
    <name type="common">Burkholderia cepacia (strain J2315)</name>
    <dbReference type="NCBI Taxonomy" id="216591"/>
    <lineage>
        <taxon>Bacteria</taxon>
        <taxon>Pseudomonadati</taxon>
        <taxon>Pseudomonadota</taxon>
        <taxon>Betaproteobacteria</taxon>
        <taxon>Burkholderiales</taxon>
        <taxon>Burkholderiaceae</taxon>
        <taxon>Burkholderia</taxon>
        <taxon>Burkholderia cepacia complex</taxon>
    </lineage>
</organism>